<sequence>MMIITTMQDAIGRTPVFKFTNKDYPIPLNSAIYAKLEHLNPGGSVKDRLGQYLIGEGFKTGKITSKTTIIEPTAGNTGIALALVAIKHHLKTIFVVPEKFSTEKQQIMRALGALVINTPTSEGISGAIKKSKELAESIPDSYLPLQFENPDNPAAYYHTLAPEIVQELGTNLTSFVAGIGSGGTFAGTARYLKERIPAIRLIGVEPEGSILNGGEPGPHEIEGIGVEFIPPFFENLDIDGFETISDEEGFSYTRKLAKKNGLLVGSSSGAAFVAALKEAQRLPEGSQVLTIFPDVADRYLSKGIYL</sequence>
<comment type="catalytic activity">
    <reaction>
        <text>O-acetyl-L-serine + hydrogen sulfide = L-cysteine + acetate</text>
        <dbReference type="Rhea" id="RHEA:14829"/>
        <dbReference type="ChEBI" id="CHEBI:29919"/>
        <dbReference type="ChEBI" id="CHEBI:30089"/>
        <dbReference type="ChEBI" id="CHEBI:35235"/>
        <dbReference type="ChEBI" id="CHEBI:58340"/>
        <dbReference type="EC" id="2.5.1.47"/>
    </reaction>
</comment>
<comment type="cofactor">
    <cofactor>
        <name>pyridoxal 5'-phosphate</name>
        <dbReference type="ChEBI" id="CHEBI:597326"/>
    </cofactor>
</comment>
<comment type="pathway">
    <text>Amino-acid biosynthesis; L-cysteine biosynthesis; L-cysteine from L-serine: step 2/2.</text>
</comment>
<comment type="subunit">
    <text evidence="1">Homodimer.</text>
</comment>
<comment type="similarity">
    <text evidence="2">Belongs to the cysteine synthase/cystathionine beta-synthase family.</text>
</comment>
<keyword id="KW-0002">3D-structure</keyword>
<keyword id="KW-0028">Amino-acid biosynthesis</keyword>
<keyword id="KW-0198">Cysteine biosynthesis</keyword>
<keyword id="KW-0663">Pyridoxal phosphate</keyword>
<keyword id="KW-1185">Reference proteome</keyword>
<keyword id="KW-0808">Transferase</keyword>
<name>CYSM_HELPY</name>
<evidence type="ECO:0000250" key="1"/>
<evidence type="ECO:0000305" key="2"/>
<evidence type="ECO:0007829" key="3">
    <source>
        <dbReference type="PDB" id="6AHI"/>
    </source>
</evidence>
<dbReference type="EC" id="2.5.1.47"/>
<dbReference type="EMBL" id="AE000511">
    <property type="protein sequence ID" value="AAD07177.1"/>
    <property type="molecule type" value="Genomic_DNA"/>
</dbReference>
<dbReference type="PIR" id="C64533">
    <property type="entry name" value="C64533"/>
</dbReference>
<dbReference type="RefSeq" id="NP_206907.1">
    <property type="nucleotide sequence ID" value="NC_000915.1"/>
</dbReference>
<dbReference type="PDB" id="6AHI">
    <property type="method" value="X-ray"/>
    <property type="resolution" value="1.90 A"/>
    <property type="chains" value="A/B=1-306"/>
</dbReference>
<dbReference type="PDBsum" id="6AHI"/>
<dbReference type="SMR" id="P56067"/>
<dbReference type="DIP" id="DIP-3738N"/>
<dbReference type="FunCoup" id="P56067">
    <property type="interactions" value="317"/>
</dbReference>
<dbReference type="IntAct" id="P56067">
    <property type="interactions" value="1"/>
</dbReference>
<dbReference type="MINT" id="P56067"/>
<dbReference type="STRING" id="85962.HP_0107"/>
<dbReference type="PaxDb" id="85962-C694_00530"/>
<dbReference type="EnsemblBacteria" id="AAD07177">
    <property type="protein sequence ID" value="AAD07177"/>
    <property type="gene ID" value="HP_0107"/>
</dbReference>
<dbReference type="KEGG" id="hpy:HP_0107"/>
<dbReference type="PATRIC" id="fig|85962.8.peg.114"/>
<dbReference type="eggNOG" id="COG0031">
    <property type="taxonomic scope" value="Bacteria"/>
</dbReference>
<dbReference type="InParanoid" id="P56067"/>
<dbReference type="OrthoDB" id="9805733at2"/>
<dbReference type="PhylomeDB" id="P56067"/>
<dbReference type="BioCyc" id="MetaCyc:HP_RS00545-MONOMER"/>
<dbReference type="UniPathway" id="UPA00136">
    <property type="reaction ID" value="UER00200"/>
</dbReference>
<dbReference type="Proteomes" id="UP000000429">
    <property type="component" value="Chromosome"/>
</dbReference>
<dbReference type="GO" id="GO:0005737">
    <property type="term" value="C:cytoplasm"/>
    <property type="evidence" value="ECO:0000318"/>
    <property type="project" value="GO_Central"/>
</dbReference>
<dbReference type="GO" id="GO:0004122">
    <property type="term" value="F:cystathionine beta-synthase activity"/>
    <property type="evidence" value="ECO:0000318"/>
    <property type="project" value="GO_Central"/>
</dbReference>
<dbReference type="GO" id="GO:0004124">
    <property type="term" value="F:cysteine synthase activity"/>
    <property type="evidence" value="ECO:0000318"/>
    <property type="project" value="GO_Central"/>
</dbReference>
<dbReference type="GO" id="GO:0019344">
    <property type="term" value="P:cysteine biosynthetic process"/>
    <property type="evidence" value="ECO:0000318"/>
    <property type="project" value="GO_Central"/>
</dbReference>
<dbReference type="GO" id="GO:0006535">
    <property type="term" value="P:cysteine biosynthetic process from serine"/>
    <property type="evidence" value="ECO:0007669"/>
    <property type="project" value="InterPro"/>
</dbReference>
<dbReference type="CDD" id="cd01561">
    <property type="entry name" value="CBS_like"/>
    <property type="match status" value="1"/>
</dbReference>
<dbReference type="FunFam" id="3.40.50.1100:FF:000016">
    <property type="entry name" value="Cysteine synthase A"/>
    <property type="match status" value="1"/>
</dbReference>
<dbReference type="FunFam" id="3.40.50.1100:FF:000118">
    <property type="entry name" value="Related to CYS4-cystathionine beta-synthase"/>
    <property type="match status" value="1"/>
</dbReference>
<dbReference type="Gene3D" id="3.40.50.1100">
    <property type="match status" value="2"/>
</dbReference>
<dbReference type="InterPro" id="IPR050214">
    <property type="entry name" value="Cys_Synth/Cystath_Beta-Synth"/>
</dbReference>
<dbReference type="InterPro" id="IPR001216">
    <property type="entry name" value="P-phosphate_BS"/>
</dbReference>
<dbReference type="InterPro" id="IPR001926">
    <property type="entry name" value="TrpB-like_PALP"/>
</dbReference>
<dbReference type="InterPro" id="IPR036052">
    <property type="entry name" value="TrpB-like_PALP_sf"/>
</dbReference>
<dbReference type="PANTHER" id="PTHR10314">
    <property type="entry name" value="CYSTATHIONINE BETA-SYNTHASE"/>
    <property type="match status" value="1"/>
</dbReference>
<dbReference type="Pfam" id="PF00291">
    <property type="entry name" value="PALP"/>
    <property type="match status" value="1"/>
</dbReference>
<dbReference type="SUPFAM" id="SSF53686">
    <property type="entry name" value="Tryptophan synthase beta subunit-like PLP-dependent enzymes"/>
    <property type="match status" value="1"/>
</dbReference>
<dbReference type="PROSITE" id="PS00901">
    <property type="entry name" value="CYS_SYNTHASE"/>
    <property type="match status" value="1"/>
</dbReference>
<reference key="1">
    <citation type="journal article" date="1997" name="Nature">
        <title>The complete genome sequence of the gastric pathogen Helicobacter pylori.</title>
        <authorList>
            <person name="Tomb J.-F."/>
            <person name="White O."/>
            <person name="Kerlavage A.R."/>
            <person name="Clayton R.A."/>
            <person name="Sutton G.G."/>
            <person name="Fleischmann R.D."/>
            <person name="Ketchum K.A."/>
            <person name="Klenk H.-P."/>
            <person name="Gill S.R."/>
            <person name="Dougherty B.A."/>
            <person name="Nelson K.E."/>
            <person name="Quackenbush J."/>
            <person name="Zhou L."/>
            <person name="Kirkness E.F."/>
            <person name="Peterson S.N."/>
            <person name="Loftus B.J."/>
            <person name="Richardson D.L."/>
            <person name="Dodson R.J."/>
            <person name="Khalak H.G."/>
            <person name="Glodek A."/>
            <person name="McKenney K."/>
            <person name="FitzGerald L.M."/>
            <person name="Lee N."/>
            <person name="Adams M.D."/>
            <person name="Hickey E.K."/>
            <person name="Berg D.E."/>
            <person name="Gocayne J.D."/>
            <person name="Utterback T.R."/>
            <person name="Peterson J.D."/>
            <person name="Kelley J.M."/>
            <person name="Cotton M.D."/>
            <person name="Weidman J.F."/>
            <person name="Fujii C."/>
            <person name="Bowman C."/>
            <person name="Watthey L."/>
            <person name="Wallin E."/>
            <person name="Hayes W.S."/>
            <person name="Borodovsky M."/>
            <person name="Karp P.D."/>
            <person name="Smith H.O."/>
            <person name="Fraser C.M."/>
            <person name="Venter J.C."/>
        </authorList>
    </citation>
    <scope>NUCLEOTIDE SEQUENCE [LARGE SCALE GENOMIC DNA]</scope>
    <source>
        <strain>ATCC 700392 / 26695</strain>
    </source>
</reference>
<feature type="chain" id="PRO_0000167110" description="Cysteine synthase">
    <location>
        <begin position="1"/>
        <end position="306"/>
    </location>
</feature>
<feature type="binding site" evidence="1">
    <location>
        <position position="76"/>
    </location>
    <ligand>
        <name>pyridoxal 5'-phosphate</name>
        <dbReference type="ChEBI" id="CHEBI:597326"/>
    </ligand>
</feature>
<feature type="binding site" evidence="1">
    <location>
        <begin position="180"/>
        <end position="184"/>
    </location>
    <ligand>
        <name>pyridoxal 5'-phosphate</name>
        <dbReference type="ChEBI" id="CHEBI:597326"/>
    </ligand>
</feature>
<feature type="binding site" evidence="1">
    <location>
        <position position="267"/>
    </location>
    <ligand>
        <name>pyridoxal 5'-phosphate</name>
        <dbReference type="ChEBI" id="CHEBI:597326"/>
    </ligand>
</feature>
<feature type="modified residue" description="N6-(pyridoxal phosphate)lysine" evidence="1">
    <location>
        <position position="46"/>
    </location>
</feature>
<feature type="strand" evidence="3">
    <location>
        <begin position="3"/>
        <end position="6"/>
    </location>
</feature>
<feature type="helix" evidence="3">
    <location>
        <begin position="7"/>
        <end position="10"/>
    </location>
</feature>
<feature type="strand" evidence="3">
    <location>
        <begin position="16"/>
        <end position="19"/>
    </location>
</feature>
<feature type="turn" evidence="3">
    <location>
        <begin position="21"/>
        <end position="23"/>
    </location>
</feature>
<feature type="strand" evidence="3">
    <location>
        <begin position="31"/>
        <end position="36"/>
    </location>
</feature>
<feature type="helix" evidence="3">
    <location>
        <begin position="37"/>
        <end position="39"/>
    </location>
</feature>
<feature type="helix" evidence="3">
    <location>
        <begin position="48"/>
        <end position="60"/>
    </location>
</feature>
<feature type="strand" evidence="3">
    <location>
        <begin position="68"/>
        <end position="72"/>
    </location>
</feature>
<feature type="helix" evidence="3">
    <location>
        <begin position="76"/>
        <end position="85"/>
    </location>
</feature>
<feature type="turn" evidence="3">
    <location>
        <begin position="86"/>
        <end position="89"/>
    </location>
</feature>
<feature type="strand" evidence="3">
    <location>
        <begin position="91"/>
        <end position="97"/>
    </location>
</feature>
<feature type="helix" evidence="3">
    <location>
        <begin position="102"/>
        <end position="110"/>
    </location>
</feature>
<feature type="strand" evidence="3">
    <location>
        <begin position="114"/>
        <end position="118"/>
    </location>
</feature>
<feature type="helix" evidence="3">
    <location>
        <begin position="120"/>
        <end position="122"/>
    </location>
</feature>
<feature type="helix" evidence="3">
    <location>
        <begin position="123"/>
        <end position="137"/>
    </location>
</feature>
<feature type="turn" evidence="3">
    <location>
        <begin position="146"/>
        <end position="148"/>
    </location>
</feature>
<feature type="helix" evidence="3">
    <location>
        <begin position="151"/>
        <end position="158"/>
    </location>
</feature>
<feature type="helix" evidence="3">
    <location>
        <begin position="160"/>
        <end position="168"/>
    </location>
</feature>
<feature type="strand" evidence="3">
    <location>
        <begin position="174"/>
        <end position="178"/>
    </location>
</feature>
<feature type="strand" evidence="3">
    <location>
        <begin position="180"/>
        <end position="182"/>
    </location>
</feature>
<feature type="helix" evidence="3">
    <location>
        <begin position="183"/>
        <end position="195"/>
    </location>
</feature>
<feature type="strand" evidence="3">
    <location>
        <begin position="200"/>
        <end position="206"/>
    </location>
</feature>
<feature type="strand" evidence="3">
    <location>
        <begin position="240"/>
        <end position="244"/>
    </location>
</feature>
<feature type="helix" evidence="3">
    <location>
        <begin position="246"/>
        <end position="260"/>
    </location>
</feature>
<feature type="helix" evidence="3">
    <location>
        <begin position="266"/>
        <end position="281"/>
    </location>
</feature>
<feature type="strand" evidence="3">
    <location>
        <begin position="287"/>
        <end position="292"/>
    </location>
</feature>
<feature type="helix" evidence="3">
    <location>
        <begin position="296"/>
        <end position="302"/>
    </location>
</feature>
<feature type="turn" evidence="3">
    <location>
        <begin position="303"/>
        <end position="305"/>
    </location>
</feature>
<organism>
    <name type="scientific">Helicobacter pylori (strain ATCC 700392 / 26695)</name>
    <name type="common">Campylobacter pylori</name>
    <dbReference type="NCBI Taxonomy" id="85962"/>
    <lineage>
        <taxon>Bacteria</taxon>
        <taxon>Pseudomonadati</taxon>
        <taxon>Campylobacterota</taxon>
        <taxon>Epsilonproteobacteria</taxon>
        <taxon>Campylobacterales</taxon>
        <taxon>Helicobacteraceae</taxon>
        <taxon>Helicobacter</taxon>
    </lineage>
</organism>
<proteinExistence type="evidence at protein level"/>
<gene>
    <name type="primary">cysM</name>
    <name type="synonym">cysK</name>
    <name type="ordered locus">HP_0107</name>
</gene>
<accession>P56067</accession>
<protein>
    <recommendedName>
        <fullName>Cysteine synthase</fullName>
        <shortName>CSase</shortName>
        <ecNumber>2.5.1.47</ecNumber>
    </recommendedName>
    <alternativeName>
        <fullName>O-acetylserine (thiol)-lyase</fullName>
        <shortName>OAS-TL</shortName>
    </alternativeName>
    <alternativeName>
        <fullName>O-acetylserine sulfhydrylase</fullName>
    </alternativeName>
</protein>